<keyword id="KW-1185">Reference proteome</keyword>
<keyword id="KW-0687">Ribonucleoprotein</keyword>
<keyword id="KW-0689">Ribosomal protein</keyword>
<keyword id="KW-0694">RNA-binding</keyword>
<keyword id="KW-0699">rRNA-binding</keyword>
<proteinExistence type="inferred from homology"/>
<sequence length="49" mass="5812">MGAQDPTDEDRHVCRDTGRKQGLVGKYDIWLCRQSFREMARDMGFKKYD</sequence>
<protein>
    <recommendedName>
        <fullName evidence="1">Small ribosomal subunit protein uS14B</fullName>
    </recommendedName>
    <alternativeName>
        <fullName evidence="2">30S ribosomal protein S14 type Z 2</fullName>
    </alternativeName>
</protein>
<evidence type="ECO:0000255" key="1">
    <source>
        <dbReference type="HAMAP-Rule" id="MF_01364"/>
    </source>
</evidence>
<evidence type="ECO:0000305" key="2"/>
<accession>Q3ISB2</accession>
<gene>
    <name evidence="1" type="primary">rps14b</name>
    <name evidence="1" type="synonym">rps142</name>
    <name type="ordered locus">NP_1768A</name>
</gene>
<name>RS142_NATPD</name>
<feature type="chain" id="PRO_0000269169" description="Small ribosomal subunit protein uS14B">
    <location>
        <begin position="1"/>
        <end position="49"/>
    </location>
</feature>
<comment type="function">
    <text evidence="1">Binds 16S rRNA, required for the assembly of 30S particles.</text>
</comment>
<comment type="subunit">
    <text evidence="1">Part of the 30S ribosomal subunit.</text>
</comment>
<comment type="similarity">
    <text evidence="1">Belongs to the universal ribosomal protein uS14 family. Zinc-binding uS14 subfamily.</text>
</comment>
<comment type="caution">
    <text evidence="2">Unlike some other archaeal S14P proteins, this is unable to bind zinc.</text>
</comment>
<reference key="1">
    <citation type="journal article" date="2005" name="Genome Res.">
        <title>Living with two extremes: conclusions from the genome sequence of Natronomonas pharaonis.</title>
        <authorList>
            <person name="Falb M."/>
            <person name="Pfeiffer F."/>
            <person name="Palm P."/>
            <person name="Rodewald K."/>
            <person name="Hickmann V."/>
            <person name="Tittor J."/>
            <person name="Oesterhelt D."/>
        </authorList>
    </citation>
    <scope>NUCLEOTIDE SEQUENCE [LARGE SCALE GENOMIC DNA]</scope>
    <source>
        <strain>ATCC 35678 / DSM 2160 / CIP 103997 / JCM 8858 / NBRC 14720 / NCIMB 2260 / Gabara</strain>
    </source>
</reference>
<organism>
    <name type="scientific">Natronomonas pharaonis (strain ATCC 35678 / DSM 2160 / CIP 103997 / JCM 8858 / NBRC 14720 / NCIMB 2260 / Gabara)</name>
    <name type="common">Halobacterium pharaonis</name>
    <dbReference type="NCBI Taxonomy" id="348780"/>
    <lineage>
        <taxon>Archaea</taxon>
        <taxon>Methanobacteriati</taxon>
        <taxon>Methanobacteriota</taxon>
        <taxon>Stenosarchaea group</taxon>
        <taxon>Halobacteria</taxon>
        <taxon>Halobacteriales</taxon>
        <taxon>Haloarculaceae</taxon>
        <taxon>Natronomonas</taxon>
    </lineage>
</organism>
<dbReference type="EMBL" id="CR936257">
    <property type="protein sequence ID" value="CAI48975.1"/>
    <property type="molecule type" value="Genomic_DNA"/>
</dbReference>
<dbReference type="RefSeq" id="WP_011322608.1">
    <property type="nucleotide sequence ID" value="NC_007426.1"/>
</dbReference>
<dbReference type="SMR" id="Q3ISB2"/>
<dbReference type="STRING" id="348780.NP_1768A"/>
<dbReference type="EnsemblBacteria" id="CAI48975">
    <property type="protein sequence ID" value="CAI48975"/>
    <property type="gene ID" value="NP_1768A"/>
</dbReference>
<dbReference type="GeneID" id="3703170"/>
<dbReference type="KEGG" id="nph:NP_1768A"/>
<dbReference type="eggNOG" id="arCOG00782">
    <property type="taxonomic scope" value="Archaea"/>
</dbReference>
<dbReference type="HOGENOM" id="CLU_177289_2_1_2"/>
<dbReference type="OrthoDB" id="5615at2157"/>
<dbReference type="Proteomes" id="UP000002698">
    <property type="component" value="Chromosome"/>
</dbReference>
<dbReference type="GO" id="GO:0022627">
    <property type="term" value="C:cytosolic small ribosomal subunit"/>
    <property type="evidence" value="ECO:0007669"/>
    <property type="project" value="TreeGrafter"/>
</dbReference>
<dbReference type="GO" id="GO:0019843">
    <property type="term" value="F:rRNA binding"/>
    <property type="evidence" value="ECO:0007669"/>
    <property type="project" value="UniProtKB-UniRule"/>
</dbReference>
<dbReference type="GO" id="GO:0003735">
    <property type="term" value="F:structural constituent of ribosome"/>
    <property type="evidence" value="ECO:0007669"/>
    <property type="project" value="InterPro"/>
</dbReference>
<dbReference type="GO" id="GO:0008270">
    <property type="term" value="F:zinc ion binding"/>
    <property type="evidence" value="ECO:0007669"/>
    <property type="project" value="InterPro"/>
</dbReference>
<dbReference type="GO" id="GO:0002181">
    <property type="term" value="P:cytoplasmic translation"/>
    <property type="evidence" value="ECO:0007669"/>
    <property type="project" value="TreeGrafter"/>
</dbReference>
<dbReference type="Gene3D" id="4.10.830.10">
    <property type="entry name" value="30s Ribosomal Protein S14, Chain N"/>
    <property type="match status" value="1"/>
</dbReference>
<dbReference type="HAMAP" id="MF_01364_A">
    <property type="entry name" value="Ribosomal_uS14_2_A"/>
    <property type="match status" value="1"/>
</dbReference>
<dbReference type="InterPro" id="IPR001209">
    <property type="entry name" value="Ribosomal_uS14"/>
</dbReference>
<dbReference type="InterPro" id="IPR023676">
    <property type="entry name" value="Ribosomal_uS14_arc"/>
</dbReference>
<dbReference type="InterPro" id="IPR039744">
    <property type="entry name" value="RIbosomal_uS14_euk_arc"/>
</dbReference>
<dbReference type="InterPro" id="IPR043140">
    <property type="entry name" value="Ribosomal_uS14_sf"/>
</dbReference>
<dbReference type="NCBIfam" id="NF004424">
    <property type="entry name" value="PRK05766.1"/>
    <property type="match status" value="1"/>
</dbReference>
<dbReference type="PANTHER" id="PTHR12010">
    <property type="entry name" value="40S RIBOSOMAL PROTEIN S29"/>
    <property type="match status" value="1"/>
</dbReference>
<dbReference type="PANTHER" id="PTHR12010:SF2">
    <property type="entry name" value="40S RIBOSOMAL PROTEIN S29"/>
    <property type="match status" value="1"/>
</dbReference>
<dbReference type="Pfam" id="PF00253">
    <property type="entry name" value="Ribosomal_S14"/>
    <property type="match status" value="1"/>
</dbReference>